<accession>B1ZJ88</accession>
<feature type="chain" id="PRO_1000196815" description="Formate--tetrahydrofolate ligase">
    <location>
        <begin position="1"/>
        <end position="557"/>
    </location>
</feature>
<feature type="binding site" evidence="1">
    <location>
        <begin position="65"/>
        <end position="72"/>
    </location>
    <ligand>
        <name>ATP</name>
        <dbReference type="ChEBI" id="CHEBI:30616"/>
    </ligand>
</feature>
<protein>
    <recommendedName>
        <fullName evidence="1">Formate--tetrahydrofolate ligase</fullName>
        <ecNumber evidence="1">6.3.4.3</ecNumber>
    </recommendedName>
    <alternativeName>
        <fullName evidence="1">Formyltetrahydrofolate synthetase</fullName>
        <shortName evidence="1">FHS</shortName>
        <shortName evidence="1">FTHFS</shortName>
    </alternativeName>
</protein>
<comment type="catalytic activity">
    <reaction evidence="1">
        <text>(6S)-5,6,7,8-tetrahydrofolate + formate + ATP = (6R)-10-formyltetrahydrofolate + ADP + phosphate</text>
        <dbReference type="Rhea" id="RHEA:20221"/>
        <dbReference type="ChEBI" id="CHEBI:15740"/>
        <dbReference type="ChEBI" id="CHEBI:30616"/>
        <dbReference type="ChEBI" id="CHEBI:43474"/>
        <dbReference type="ChEBI" id="CHEBI:57453"/>
        <dbReference type="ChEBI" id="CHEBI:195366"/>
        <dbReference type="ChEBI" id="CHEBI:456216"/>
        <dbReference type="EC" id="6.3.4.3"/>
    </reaction>
</comment>
<comment type="pathway">
    <text evidence="1">One-carbon metabolism; tetrahydrofolate interconversion.</text>
</comment>
<comment type="similarity">
    <text evidence="1">Belongs to the formate--tetrahydrofolate ligase family.</text>
</comment>
<keyword id="KW-0067">ATP-binding</keyword>
<keyword id="KW-0436">Ligase</keyword>
<keyword id="KW-0547">Nucleotide-binding</keyword>
<keyword id="KW-0554">One-carbon metabolism</keyword>
<dbReference type="EC" id="6.3.4.3" evidence="1"/>
<dbReference type="EMBL" id="CP001029">
    <property type="protein sequence ID" value="ACB78662.1"/>
    <property type="molecule type" value="Genomic_DNA"/>
</dbReference>
<dbReference type="RefSeq" id="WP_012452420.1">
    <property type="nucleotide sequence ID" value="NC_010725.1"/>
</dbReference>
<dbReference type="SMR" id="B1ZJ88"/>
<dbReference type="STRING" id="441620.Mpop_0484"/>
<dbReference type="KEGG" id="mpo:Mpop_0484"/>
<dbReference type="eggNOG" id="COG2759">
    <property type="taxonomic scope" value="Bacteria"/>
</dbReference>
<dbReference type="HOGENOM" id="CLU_003601_3_3_5"/>
<dbReference type="OrthoDB" id="9761733at2"/>
<dbReference type="UniPathway" id="UPA00193"/>
<dbReference type="Proteomes" id="UP000007136">
    <property type="component" value="Chromosome"/>
</dbReference>
<dbReference type="GO" id="GO:0005524">
    <property type="term" value="F:ATP binding"/>
    <property type="evidence" value="ECO:0007669"/>
    <property type="project" value="UniProtKB-UniRule"/>
</dbReference>
<dbReference type="GO" id="GO:0004329">
    <property type="term" value="F:formate-tetrahydrofolate ligase activity"/>
    <property type="evidence" value="ECO:0007669"/>
    <property type="project" value="UniProtKB-UniRule"/>
</dbReference>
<dbReference type="GO" id="GO:0035999">
    <property type="term" value="P:tetrahydrofolate interconversion"/>
    <property type="evidence" value="ECO:0007669"/>
    <property type="project" value="UniProtKB-UniRule"/>
</dbReference>
<dbReference type="CDD" id="cd00477">
    <property type="entry name" value="FTHFS"/>
    <property type="match status" value="1"/>
</dbReference>
<dbReference type="FunFam" id="3.30.1510.10:FF:000001">
    <property type="entry name" value="Formate--tetrahydrofolate ligase"/>
    <property type="match status" value="1"/>
</dbReference>
<dbReference type="FunFam" id="3.10.410.10:FF:000001">
    <property type="entry name" value="Putative formate--tetrahydrofolate ligase"/>
    <property type="match status" value="1"/>
</dbReference>
<dbReference type="Gene3D" id="3.30.1510.10">
    <property type="entry name" value="Domain 2, N(10)-formyltetrahydrofolate synthetase"/>
    <property type="match status" value="1"/>
</dbReference>
<dbReference type="Gene3D" id="3.10.410.10">
    <property type="entry name" value="Formyltetrahydrofolate synthetase, domain 3"/>
    <property type="match status" value="1"/>
</dbReference>
<dbReference type="Gene3D" id="3.40.50.300">
    <property type="entry name" value="P-loop containing nucleotide triphosphate hydrolases"/>
    <property type="match status" value="1"/>
</dbReference>
<dbReference type="HAMAP" id="MF_01543">
    <property type="entry name" value="FTHFS"/>
    <property type="match status" value="1"/>
</dbReference>
<dbReference type="InterPro" id="IPR000559">
    <property type="entry name" value="Formate_THF_ligase"/>
</dbReference>
<dbReference type="InterPro" id="IPR020628">
    <property type="entry name" value="Formate_THF_ligase_CS"/>
</dbReference>
<dbReference type="InterPro" id="IPR027417">
    <property type="entry name" value="P-loop_NTPase"/>
</dbReference>
<dbReference type="NCBIfam" id="NF010030">
    <property type="entry name" value="PRK13505.1"/>
    <property type="match status" value="1"/>
</dbReference>
<dbReference type="Pfam" id="PF01268">
    <property type="entry name" value="FTHFS"/>
    <property type="match status" value="1"/>
</dbReference>
<dbReference type="SUPFAM" id="SSF52540">
    <property type="entry name" value="P-loop containing nucleoside triphosphate hydrolases"/>
    <property type="match status" value="1"/>
</dbReference>
<dbReference type="PROSITE" id="PS00721">
    <property type="entry name" value="FTHFS_1"/>
    <property type="match status" value="1"/>
</dbReference>
<dbReference type="PROSITE" id="PS00722">
    <property type="entry name" value="FTHFS_2"/>
    <property type="match status" value="1"/>
</dbReference>
<gene>
    <name evidence="1" type="primary">fhs</name>
    <name type="ordered locus">Mpop_0484</name>
</gene>
<reference key="1">
    <citation type="submission" date="2008-04" db="EMBL/GenBank/DDBJ databases">
        <title>Complete sequence of chromosome of Methylobacterium populi BJ001.</title>
        <authorList>
            <consortium name="US DOE Joint Genome Institute"/>
            <person name="Copeland A."/>
            <person name="Lucas S."/>
            <person name="Lapidus A."/>
            <person name="Glavina del Rio T."/>
            <person name="Dalin E."/>
            <person name="Tice H."/>
            <person name="Bruce D."/>
            <person name="Goodwin L."/>
            <person name="Pitluck S."/>
            <person name="Chertkov O."/>
            <person name="Brettin T."/>
            <person name="Detter J.C."/>
            <person name="Han C."/>
            <person name="Kuske C.R."/>
            <person name="Schmutz J."/>
            <person name="Larimer F."/>
            <person name="Land M."/>
            <person name="Hauser L."/>
            <person name="Kyrpides N."/>
            <person name="Mikhailova N."/>
            <person name="Marx C."/>
            <person name="Richardson P."/>
        </authorList>
    </citation>
    <scope>NUCLEOTIDE SEQUENCE [LARGE SCALE GENOMIC DNA]</scope>
    <source>
        <strain>ATCC BAA-705 / NCIMB 13946 / BJ001</strain>
    </source>
</reference>
<proteinExistence type="inferred from homology"/>
<sequence length="557" mass="59441">MPSDIEIARAATLKPIAQVAERIGIPDEALHNYGKHIAKIDHGFIKSLEGKPEGKLVLVTAISPTPAGEGKTTTTVGLGDALNRIGQRAVMCLREPSLGPCFGMKGGAAGGGKAQVVPMEQINLHFTGDFHAITSAHSLAAALIDNHVYWANELNIDVRRIHWRRVVDMNDRALRAINQSLGGVANGFPREDGFDITVASEVMAVFCLARDLADLEERLGRIVIAETRDRKPVTLADVKATGAMTVLLKDALQPNLVQTLEGNPALIHGGPFANIAHGCNSVIATQTGLRLADYVVTEAGFGADLGAEKFIDIKCRQTGLKPSAVVIVATVRALKMHGGVNKKDLQGENLDALEKGFANLERHVKNVRGFGLPVVVGVNHFFQDTDAEHAKLKELCRDRLQVEAITCKHWAEGGAGAEELAQAVVKLAEGEQKPLTFAYDTETKLTDKIKAIATKLYGAADIQIESKAATKLAGFEKDGYGHLPICMAKTQYSFSTDPTLMGAPSGHLVSVRDVRLSAGAGFVVAICGEIMTMPGLPKVPAADTIRLDANGQIDGLF</sequence>
<organism>
    <name type="scientific">Methylorubrum populi (strain ATCC BAA-705 / NCIMB 13946 / BJ001)</name>
    <name type="common">Methylobacterium populi</name>
    <dbReference type="NCBI Taxonomy" id="441620"/>
    <lineage>
        <taxon>Bacteria</taxon>
        <taxon>Pseudomonadati</taxon>
        <taxon>Pseudomonadota</taxon>
        <taxon>Alphaproteobacteria</taxon>
        <taxon>Hyphomicrobiales</taxon>
        <taxon>Methylobacteriaceae</taxon>
        <taxon>Methylorubrum</taxon>
    </lineage>
</organism>
<name>FTHS_METPB</name>
<evidence type="ECO:0000255" key="1">
    <source>
        <dbReference type="HAMAP-Rule" id="MF_01543"/>
    </source>
</evidence>